<accession>B8EBI7</accession>
<protein>
    <recommendedName>
        <fullName evidence="1">Large ribosomal subunit protein uL30</fullName>
    </recommendedName>
    <alternativeName>
        <fullName evidence="2">50S ribosomal protein L30</fullName>
    </alternativeName>
</protein>
<gene>
    <name evidence="1" type="primary">rpmD</name>
    <name type="ordered locus">Sbal223_4038</name>
</gene>
<dbReference type="EMBL" id="CP001252">
    <property type="protein sequence ID" value="ACK48511.1"/>
    <property type="molecule type" value="Genomic_DNA"/>
</dbReference>
<dbReference type="RefSeq" id="WP_006083582.1">
    <property type="nucleotide sequence ID" value="NC_011663.1"/>
</dbReference>
<dbReference type="SMR" id="B8EBI7"/>
<dbReference type="GeneID" id="75190600"/>
<dbReference type="KEGG" id="sbp:Sbal223_4038"/>
<dbReference type="HOGENOM" id="CLU_131047_1_4_6"/>
<dbReference type="Proteomes" id="UP000002507">
    <property type="component" value="Chromosome"/>
</dbReference>
<dbReference type="GO" id="GO:0022625">
    <property type="term" value="C:cytosolic large ribosomal subunit"/>
    <property type="evidence" value="ECO:0007669"/>
    <property type="project" value="TreeGrafter"/>
</dbReference>
<dbReference type="GO" id="GO:0003735">
    <property type="term" value="F:structural constituent of ribosome"/>
    <property type="evidence" value="ECO:0007669"/>
    <property type="project" value="InterPro"/>
</dbReference>
<dbReference type="GO" id="GO:0006412">
    <property type="term" value="P:translation"/>
    <property type="evidence" value="ECO:0007669"/>
    <property type="project" value="UniProtKB-UniRule"/>
</dbReference>
<dbReference type="CDD" id="cd01658">
    <property type="entry name" value="Ribosomal_L30"/>
    <property type="match status" value="1"/>
</dbReference>
<dbReference type="FunFam" id="3.30.1390.20:FF:000001">
    <property type="entry name" value="50S ribosomal protein L30"/>
    <property type="match status" value="1"/>
</dbReference>
<dbReference type="Gene3D" id="3.30.1390.20">
    <property type="entry name" value="Ribosomal protein L30, ferredoxin-like fold domain"/>
    <property type="match status" value="1"/>
</dbReference>
<dbReference type="HAMAP" id="MF_01371_B">
    <property type="entry name" value="Ribosomal_uL30_B"/>
    <property type="match status" value="1"/>
</dbReference>
<dbReference type="InterPro" id="IPR036919">
    <property type="entry name" value="Ribo_uL30_ferredoxin-like_sf"/>
</dbReference>
<dbReference type="InterPro" id="IPR005996">
    <property type="entry name" value="Ribosomal_uL30_bac-type"/>
</dbReference>
<dbReference type="InterPro" id="IPR018038">
    <property type="entry name" value="Ribosomal_uL30_CS"/>
</dbReference>
<dbReference type="InterPro" id="IPR016082">
    <property type="entry name" value="Ribosomal_uL30_ferredoxin-like"/>
</dbReference>
<dbReference type="NCBIfam" id="TIGR01308">
    <property type="entry name" value="rpmD_bact"/>
    <property type="match status" value="1"/>
</dbReference>
<dbReference type="PANTHER" id="PTHR15892:SF2">
    <property type="entry name" value="LARGE RIBOSOMAL SUBUNIT PROTEIN UL30M"/>
    <property type="match status" value="1"/>
</dbReference>
<dbReference type="PANTHER" id="PTHR15892">
    <property type="entry name" value="MITOCHONDRIAL RIBOSOMAL PROTEIN L30"/>
    <property type="match status" value="1"/>
</dbReference>
<dbReference type="Pfam" id="PF00327">
    <property type="entry name" value="Ribosomal_L30"/>
    <property type="match status" value="1"/>
</dbReference>
<dbReference type="PIRSF" id="PIRSF002211">
    <property type="entry name" value="Ribosomal_L30_bac-type"/>
    <property type="match status" value="1"/>
</dbReference>
<dbReference type="SUPFAM" id="SSF55129">
    <property type="entry name" value="Ribosomal protein L30p/L7e"/>
    <property type="match status" value="1"/>
</dbReference>
<dbReference type="PROSITE" id="PS00634">
    <property type="entry name" value="RIBOSOMAL_L30"/>
    <property type="match status" value="1"/>
</dbReference>
<evidence type="ECO:0000255" key="1">
    <source>
        <dbReference type="HAMAP-Rule" id="MF_01371"/>
    </source>
</evidence>
<evidence type="ECO:0000305" key="2"/>
<keyword id="KW-0687">Ribonucleoprotein</keyword>
<keyword id="KW-0689">Ribosomal protein</keyword>
<organism>
    <name type="scientific">Shewanella baltica (strain OS223)</name>
    <dbReference type="NCBI Taxonomy" id="407976"/>
    <lineage>
        <taxon>Bacteria</taxon>
        <taxon>Pseudomonadati</taxon>
        <taxon>Pseudomonadota</taxon>
        <taxon>Gammaproteobacteria</taxon>
        <taxon>Alteromonadales</taxon>
        <taxon>Shewanellaceae</taxon>
        <taxon>Shewanella</taxon>
    </lineage>
</organism>
<feature type="chain" id="PRO_1000184158" description="Large ribosomal subunit protein uL30">
    <location>
        <begin position="1"/>
        <end position="60"/>
    </location>
</feature>
<name>RL30_SHEB2</name>
<reference key="1">
    <citation type="submission" date="2008-12" db="EMBL/GenBank/DDBJ databases">
        <title>Complete sequence of chromosome of Shewanella baltica OS223.</title>
        <authorList>
            <consortium name="US DOE Joint Genome Institute"/>
            <person name="Lucas S."/>
            <person name="Copeland A."/>
            <person name="Lapidus A."/>
            <person name="Glavina del Rio T."/>
            <person name="Dalin E."/>
            <person name="Tice H."/>
            <person name="Bruce D."/>
            <person name="Goodwin L."/>
            <person name="Pitluck S."/>
            <person name="Chertkov O."/>
            <person name="Meincke L."/>
            <person name="Brettin T."/>
            <person name="Detter J.C."/>
            <person name="Han C."/>
            <person name="Kuske C.R."/>
            <person name="Larimer F."/>
            <person name="Land M."/>
            <person name="Hauser L."/>
            <person name="Kyrpides N."/>
            <person name="Ovchinnikova G."/>
            <person name="Brettar I."/>
            <person name="Rodrigues J."/>
            <person name="Konstantinidis K."/>
            <person name="Tiedje J."/>
        </authorList>
    </citation>
    <scope>NUCLEOTIDE SEQUENCE [LARGE SCALE GENOMIC DNA]</scope>
    <source>
        <strain>OS223</strain>
    </source>
</reference>
<comment type="subunit">
    <text evidence="1">Part of the 50S ribosomal subunit.</text>
</comment>
<comment type="similarity">
    <text evidence="1">Belongs to the universal ribosomal protein uL30 family.</text>
</comment>
<sequence>MATKTVKVTQTKSGIGRLPKHRATLTGLGLRRIGHTVELEDTPSVRGMINKVYYMVKVED</sequence>
<proteinExistence type="inferred from homology"/>